<comment type="function">
    <text evidence="1">Plays a major role in the induction and maintenance of cellular transformation. E6 associates with host UBE3A/E6-AP ubiquitin-protein ligase and modulates its activity. Protects host keratinocytes from apoptosis by mediating the degradation of host BAK1. May also inhibit host immune response.</text>
</comment>
<comment type="subunit">
    <text evidence="1">Forms homodimers. Interacts with ubiquitin-protein ligase UBE3A/E6-AP; this interaction stimulates UBE3A ubiquitin activity. Interacts with host BAK1.</text>
</comment>
<comment type="subcellular location">
    <subcellularLocation>
        <location evidence="1">Host cytoplasm</location>
    </subcellularLocation>
    <subcellularLocation>
        <location evidence="1">Host nucleus</location>
    </subcellularLocation>
</comment>
<comment type="similarity">
    <text evidence="1 2">Belongs to the papillomaviridae E6 protein family.</text>
</comment>
<evidence type="ECO:0000255" key="1">
    <source>
        <dbReference type="HAMAP-Rule" id="MF_04006"/>
    </source>
</evidence>
<evidence type="ECO:0000305" key="2"/>
<accession>P26556</accession>
<organism>
    <name type="scientific">Human papillomavirus type 5b</name>
    <dbReference type="NCBI Taxonomy" id="10599"/>
    <lineage>
        <taxon>Viruses</taxon>
        <taxon>Monodnaviria</taxon>
        <taxon>Shotokuvirae</taxon>
        <taxon>Cossaviricota</taxon>
        <taxon>Papovaviricetes</taxon>
        <taxon>Zurhausenvirales</taxon>
        <taxon>Papillomaviridae</taxon>
        <taxon>Firstpapillomavirinae</taxon>
        <taxon>Betapapillomavirus</taxon>
        <taxon>Betapapillomavirus 1</taxon>
    </lineage>
</organism>
<proteinExistence type="inferred from homology"/>
<gene>
    <name evidence="1" type="primary">E6</name>
</gene>
<keyword id="KW-0010">Activator</keyword>
<keyword id="KW-0238">DNA-binding</keyword>
<keyword id="KW-0244">Early protein</keyword>
<keyword id="KW-1035">Host cytoplasm</keyword>
<keyword id="KW-1048">Host nucleus</keyword>
<keyword id="KW-0945">Host-virus interaction</keyword>
<keyword id="KW-1090">Inhibition of host innate immune response by virus</keyword>
<keyword id="KW-0479">Metal-binding</keyword>
<keyword id="KW-1119">Modulation of host cell apoptosis by virus</keyword>
<keyword id="KW-0804">Transcription</keyword>
<keyword id="KW-0805">Transcription regulation</keyword>
<keyword id="KW-0899">Viral immunoevasion</keyword>
<keyword id="KW-0862">Zinc</keyword>
<keyword id="KW-0863">Zinc-finger</keyword>
<organismHost>
    <name type="scientific">Homo sapiens</name>
    <name type="common">Human</name>
    <dbReference type="NCBI Taxonomy" id="9606"/>
</organismHost>
<reference key="1">
    <citation type="journal article" date="1991" name="Virology">
        <title>A subtype of human papillomavirus 5 (HPV-5b) and its subgenomic segment amplified in a carcinoma: nucleotide sequences and genomic organizations.</title>
        <authorList>
            <person name="Yabe Y."/>
            <person name="Sakai A."/>
            <person name="Hitsumoto T."/>
            <person name="Kato H."/>
            <person name="Ogura H."/>
        </authorList>
    </citation>
    <scope>NUCLEOTIDE SEQUENCE [GENOMIC DNA]</scope>
</reference>
<name>VE6_HPV5B</name>
<protein>
    <recommendedName>
        <fullName evidence="1">Protein E6</fullName>
    </recommendedName>
</protein>
<dbReference type="EMBL" id="D90252">
    <property type="protein sequence ID" value="BAA14292.1"/>
    <property type="molecule type" value="Genomic_DNA"/>
</dbReference>
<dbReference type="PIR" id="E40480">
    <property type="entry name" value="W6WLB5"/>
</dbReference>
<dbReference type="SMR" id="P26556"/>
<dbReference type="Proteomes" id="UP000007669">
    <property type="component" value="Genome"/>
</dbReference>
<dbReference type="GO" id="GO:0030430">
    <property type="term" value="C:host cell cytoplasm"/>
    <property type="evidence" value="ECO:0007669"/>
    <property type="project" value="UniProtKB-SubCell"/>
</dbReference>
<dbReference type="GO" id="GO:0042025">
    <property type="term" value="C:host cell nucleus"/>
    <property type="evidence" value="ECO:0007669"/>
    <property type="project" value="UniProtKB-SubCell"/>
</dbReference>
<dbReference type="GO" id="GO:0003677">
    <property type="term" value="F:DNA binding"/>
    <property type="evidence" value="ECO:0007669"/>
    <property type="project" value="UniProtKB-UniRule"/>
</dbReference>
<dbReference type="GO" id="GO:0008270">
    <property type="term" value="F:zinc ion binding"/>
    <property type="evidence" value="ECO:0007669"/>
    <property type="project" value="UniProtKB-KW"/>
</dbReference>
<dbReference type="GO" id="GO:0006351">
    <property type="term" value="P:DNA-templated transcription"/>
    <property type="evidence" value="ECO:0007669"/>
    <property type="project" value="UniProtKB-UniRule"/>
</dbReference>
<dbReference type="GO" id="GO:0006355">
    <property type="term" value="P:regulation of DNA-templated transcription"/>
    <property type="evidence" value="ECO:0007669"/>
    <property type="project" value="UniProtKB-UniRule"/>
</dbReference>
<dbReference type="GO" id="GO:0052150">
    <property type="term" value="P:symbiont-mediated perturbation of host apoptosis"/>
    <property type="evidence" value="ECO:0007669"/>
    <property type="project" value="UniProtKB-KW"/>
</dbReference>
<dbReference type="GO" id="GO:0039648">
    <property type="term" value="P:symbiont-mediated perturbation of host ubiquitin-like protein modification"/>
    <property type="evidence" value="ECO:0007669"/>
    <property type="project" value="UniProtKB-UniRule"/>
</dbReference>
<dbReference type="GO" id="GO:0052170">
    <property type="term" value="P:symbiont-mediated suppression of host innate immune response"/>
    <property type="evidence" value="ECO:0007669"/>
    <property type="project" value="UniProtKB-KW"/>
</dbReference>
<dbReference type="GO" id="GO:0039502">
    <property type="term" value="P:symbiont-mediated suppression of host type I interferon-mediated signaling pathway"/>
    <property type="evidence" value="ECO:0007669"/>
    <property type="project" value="UniProtKB-UniRule"/>
</dbReference>
<dbReference type="Gene3D" id="3.30.240.40">
    <property type="entry name" value="E6 early regulatory protein"/>
    <property type="match status" value="2"/>
</dbReference>
<dbReference type="HAMAP" id="MF_04006">
    <property type="entry name" value="HPV_E6"/>
    <property type="match status" value="1"/>
</dbReference>
<dbReference type="InterPro" id="IPR001334">
    <property type="entry name" value="E6"/>
</dbReference>
<dbReference type="InterPro" id="IPR038575">
    <property type="entry name" value="E6_sf"/>
</dbReference>
<dbReference type="Pfam" id="PF00518">
    <property type="entry name" value="E6"/>
    <property type="match status" value="1"/>
</dbReference>
<dbReference type="SUPFAM" id="SSF161229">
    <property type="entry name" value="E6 C-terminal domain-like"/>
    <property type="match status" value="2"/>
</dbReference>
<feature type="chain" id="PRO_0000133324" description="Protein E6">
    <location>
        <begin position="1"/>
        <end position="157"/>
    </location>
</feature>
<feature type="zinc finger region" evidence="1">
    <location>
        <begin position="41"/>
        <end position="77"/>
    </location>
</feature>
<feature type="zinc finger region" evidence="1">
    <location>
        <begin position="114"/>
        <end position="150"/>
    </location>
</feature>
<sequence length="157" mass="18087">MAEGAEHQQKLTEKDKAELPSTIRDLAETLGIPLIDCIIPCNFCGKFLNYLEACEFDYKKLSLIWKDYCVFACCRVCCGATATYEFNQFYEQTVLGRDIELASGLSIFDIDIRCQTCLAFLDIIEKLDCCGRGLPFHKVRNAWKGICRQCKHFYHDW</sequence>